<keyword id="KW-0961">Cell wall biogenesis/degradation</keyword>
<keyword id="KW-1015">Disulfide bond</keyword>
<keyword id="KW-0325">Glycoprotein</keyword>
<keyword id="KW-0326">Glycosidase</keyword>
<keyword id="KW-0378">Hydrolase</keyword>
<keyword id="KW-1185">Reference proteome</keyword>
<keyword id="KW-0677">Repeat</keyword>
<keyword id="KW-0964">Secreted</keyword>
<keyword id="KW-0732">Signal</keyword>
<sequence length="472" mass="48428">MKRGALLVPFVPLALACVDPGDSNHSCASVFSVSSAAAASFCATFTVSAVTETTGVPAALLSNCDYKTKHLSSACSCLGPATAAAPTQTSAVTPTVAPTTLKANAVAPTTEAPAPTKSSTFAGNGGTTCTVTEYAAISSAVASCSNILLSDVYAPPSSTIDLQNLQTGAAVIFAGTTTFGDTPDDDFDPIVISGTDVTITGADGHVIDGNGAAYWDGKGSNGGSSKPDHFIVAKHMYYSRIENLNIQNWPVHCFDIEHTENLIISGITLDNSAGDAPNSASGSKPAAHNSDGFDIKSSTNLTLQNSWVHNQDDCVAVSSGTDIVVDNMYCYGGHGLSIGSIGGKSDNTVDGVTFSNSQVINSSNGCRIKSNSGTTGEVSNIRYENITVSGITDYGIDIQQDYLNGGPTGKPTNGVKIENITFVDVTGTMSDGKDYYILCGDGSCSNFVFENVGITGGSGDSCNYPTDTCLEA</sequence>
<evidence type="ECO:0000250" key="1"/>
<evidence type="ECO:0000255" key="2"/>
<evidence type="ECO:0000255" key="3">
    <source>
        <dbReference type="PROSITE-ProRule" id="PRU10052"/>
    </source>
</evidence>
<evidence type="ECO:0000305" key="4"/>
<accession>A1DBR6</accession>
<protein>
    <recommendedName>
        <fullName>Probable endopolygalacturonase D</fullName>
        <shortName>PGD</shortName>
        <ecNumber>3.2.1.15</ecNumber>
    </recommendedName>
    <alternativeName>
        <fullName>Pectinase D</fullName>
    </alternativeName>
    <alternativeName>
        <fullName>Polygalacturonase D</fullName>
    </alternativeName>
</protein>
<name>PGLRD_NEOFI</name>
<reference key="1">
    <citation type="journal article" date="2008" name="PLoS Genet.">
        <title>Genomic islands in the pathogenic filamentous fungus Aspergillus fumigatus.</title>
        <authorList>
            <person name="Fedorova N.D."/>
            <person name="Khaldi N."/>
            <person name="Joardar V.S."/>
            <person name="Maiti R."/>
            <person name="Amedeo P."/>
            <person name="Anderson M.J."/>
            <person name="Crabtree J."/>
            <person name="Silva J.C."/>
            <person name="Badger J.H."/>
            <person name="Albarraq A."/>
            <person name="Angiuoli S."/>
            <person name="Bussey H."/>
            <person name="Bowyer P."/>
            <person name="Cotty P.J."/>
            <person name="Dyer P.S."/>
            <person name="Egan A."/>
            <person name="Galens K."/>
            <person name="Fraser-Liggett C.M."/>
            <person name="Haas B.J."/>
            <person name="Inman J.M."/>
            <person name="Kent R."/>
            <person name="Lemieux S."/>
            <person name="Malavazi I."/>
            <person name="Orvis J."/>
            <person name="Roemer T."/>
            <person name="Ronning C.M."/>
            <person name="Sundaram J.P."/>
            <person name="Sutton G."/>
            <person name="Turner G."/>
            <person name="Venter J.C."/>
            <person name="White O.R."/>
            <person name="Whitty B.R."/>
            <person name="Youngman P."/>
            <person name="Wolfe K.H."/>
            <person name="Goldman G.H."/>
            <person name="Wortman J.R."/>
            <person name="Jiang B."/>
            <person name="Denning D.W."/>
            <person name="Nierman W.C."/>
        </authorList>
    </citation>
    <scope>NUCLEOTIDE SEQUENCE [LARGE SCALE GENOMIC DNA]</scope>
    <source>
        <strain>ATCC 1020 / DSM 3700 / CBS 544.65 / FGSC A1164 / JCM 1740 / NRRL 181 / WB 181</strain>
    </source>
</reference>
<organism>
    <name type="scientific">Neosartorya fischeri (strain ATCC 1020 / DSM 3700 / CBS 544.65 / FGSC A1164 / JCM 1740 / NRRL 181 / WB 181)</name>
    <name type="common">Aspergillus fischerianus</name>
    <dbReference type="NCBI Taxonomy" id="331117"/>
    <lineage>
        <taxon>Eukaryota</taxon>
        <taxon>Fungi</taxon>
        <taxon>Dikarya</taxon>
        <taxon>Ascomycota</taxon>
        <taxon>Pezizomycotina</taxon>
        <taxon>Eurotiomycetes</taxon>
        <taxon>Eurotiomycetidae</taxon>
        <taxon>Eurotiales</taxon>
        <taxon>Aspergillaceae</taxon>
        <taxon>Aspergillus</taxon>
        <taxon>Aspergillus subgen. Fumigati</taxon>
    </lineage>
</organism>
<gene>
    <name type="primary">pgaD</name>
    <name type="ORF">NFIA_099410</name>
</gene>
<comment type="function">
    <text evidence="1">Involved in maceration and soft-rotting of plant tissue. Hydrolyzes the 1,4-alpha glycosidic bonds of de-esterified pectate in the smooth region of the plant cell wall (By similarity).</text>
</comment>
<comment type="catalytic activity">
    <reaction>
        <text>(1,4-alpha-D-galacturonosyl)n+m + H2O = (1,4-alpha-D-galacturonosyl)n + (1,4-alpha-D-galacturonosyl)m.</text>
        <dbReference type="EC" id="3.2.1.15"/>
    </reaction>
</comment>
<comment type="subcellular location">
    <subcellularLocation>
        <location evidence="1">Secreted</location>
    </subcellularLocation>
</comment>
<comment type="similarity">
    <text evidence="4">Belongs to the glycosyl hydrolase 28 family.</text>
</comment>
<proteinExistence type="inferred from homology"/>
<dbReference type="EC" id="3.2.1.15"/>
<dbReference type="EMBL" id="DS027694">
    <property type="protein sequence ID" value="EAW20306.1"/>
    <property type="molecule type" value="Genomic_DNA"/>
</dbReference>
<dbReference type="RefSeq" id="XP_001262203.1">
    <property type="nucleotide sequence ID" value="XM_001262202.1"/>
</dbReference>
<dbReference type="SMR" id="A1DBR6"/>
<dbReference type="STRING" id="331117.A1DBR6"/>
<dbReference type="GlyCosmos" id="A1DBR6">
    <property type="glycosylation" value="5 sites, No reported glycans"/>
</dbReference>
<dbReference type="EnsemblFungi" id="EAW20306">
    <property type="protein sequence ID" value="EAW20306"/>
    <property type="gene ID" value="NFIA_099410"/>
</dbReference>
<dbReference type="GeneID" id="4588514"/>
<dbReference type="KEGG" id="nfi:NFIA_099410"/>
<dbReference type="VEuPathDB" id="FungiDB:NFIA_099410"/>
<dbReference type="eggNOG" id="ENOG502QW1P">
    <property type="taxonomic scope" value="Eukaryota"/>
</dbReference>
<dbReference type="HOGENOM" id="CLU_040116_0_0_1"/>
<dbReference type="OMA" id="SGDSCNY"/>
<dbReference type="OrthoDB" id="1546079at2759"/>
<dbReference type="Proteomes" id="UP000006702">
    <property type="component" value="Unassembled WGS sequence"/>
</dbReference>
<dbReference type="GO" id="GO:0005576">
    <property type="term" value="C:extracellular region"/>
    <property type="evidence" value="ECO:0000250"/>
    <property type="project" value="UniProtKB"/>
</dbReference>
<dbReference type="GO" id="GO:0004650">
    <property type="term" value="F:polygalacturonase activity"/>
    <property type="evidence" value="ECO:0000250"/>
    <property type="project" value="UniProtKB"/>
</dbReference>
<dbReference type="GO" id="GO:0071555">
    <property type="term" value="P:cell wall organization"/>
    <property type="evidence" value="ECO:0007669"/>
    <property type="project" value="UniProtKB-KW"/>
</dbReference>
<dbReference type="GO" id="GO:0045490">
    <property type="term" value="P:pectin catabolic process"/>
    <property type="evidence" value="ECO:0000250"/>
    <property type="project" value="UniProtKB"/>
</dbReference>
<dbReference type="FunFam" id="2.160.20.10:FF:000002">
    <property type="entry name" value="Endopolygalacturonase D"/>
    <property type="match status" value="1"/>
</dbReference>
<dbReference type="Gene3D" id="2.160.20.10">
    <property type="entry name" value="Single-stranded right-handed beta-helix, Pectin lyase-like"/>
    <property type="match status" value="1"/>
</dbReference>
<dbReference type="InterPro" id="IPR000743">
    <property type="entry name" value="Glyco_hydro_28"/>
</dbReference>
<dbReference type="InterPro" id="IPR050434">
    <property type="entry name" value="Glycosyl_hydrlase_28"/>
</dbReference>
<dbReference type="InterPro" id="IPR006626">
    <property type="entry name" value="PbH1"/>
</dbReference>
<dbReference type="InterPro" id="IPR012334">
    <property type="entry name" value="Pectin_lyas_fold"/>
</dbReference>
<dbReference type="InterPro" id="IPR011050">
    <property type="entry name" value="Pectin_lyase_fold/virulence"/>
</dbReference>
<dbReference type="PANTHER" id="PTHR31884:SF9">
    <property type="entry name" value="ENDOPOLYGALACTURONASE D-RELATED"/>
    <property type="match status" value="1"/>
</dbReference>
<dbReference type="PANTHER" id="PTHR31884">
    <property type="entry name" value="POLYGALACTURONASE"/>
    <property type="match status" value="1"/>
</dbReference>
<dbReference type="Pfam" id="PF00295">
    <property type="entry name" value="Glyco_hydro_28"/>
    <property type="match status" value="1"/>
</dbReference>
<dbReference type="SMART" id="SM00710">
    <property type="entry name" value="PbH1"/>
    <property type="match status" value="7"/>
</dbReference>
<dbReference type="SUPFAM" id="SSF51126">
    <property type="entry name" value="Pectin lyase-like"/>
    <property type="match status" value="1"/>
</dbReference>
<dbReference type="PROSITE" id="PS00502">
    <property type="entry name" value="POLYGALACTURONASE"/>
    <property type="match status" value="1"/>
</dbReference>
<feature type="signal peptide" evidence="2">
    <location>
        <begin position="1"/>
        <end position="16"/>
    </location>
</feature>
<feature type="chain" id="PRO_0000393664" description="Probable endopolygalacturonase D">
    <location>
        <begin position="17"/>
        <end position="472"/>
    </location>
</feature>
<feature type="repeat" description="PbH1 1">
    <location>
        <begin position="236"/>
        <end position="258"/>
    </location>
</feature>
<feature type="repeat" description="PbH1 2">
    <location>
        <begin position="259"/>
        <end position="297"/>
    </location>
</feature>
<feature type="repeat" description="PbH1 3">
    <location>
        <begin position="298"/>
        <end position="319"/>
    </location>
</feature>
<feature type="repeat" description="PbH1 4">
    <location>
        <begin position="349"/>
        <end position="370"/>
    </location>
</feature>
<feature type="repeat" description="PbH1 5">
    <location>
        <begin position="378"/>
        <end position="400"/>
    </location>
</feature>
<feature type="repeat" description="PbH1 6">
    <location>
        <begin position="412"/>
        <end position="433"/>
    </location>
</feature>
<feature type="repeat" description="PbH1 7">
    <location>
        <begin position="444"/>
        <end position="467"/>
    </location>
</feature>
<feature type="active site" description="Proton donor" evidence="3">
    <location>
        <position position="312"/>
    </location>
</feature>
<feature type="active site" evidence="3">
    <location>
        <position position="334"/>
    </location>
</feature>
<feature type="glycosylation site" description="N-linked (GlcNAc...) asparagine" evidence="2">
    <location>
        <position position="24"/>
    </location>
</feature>
<feature type="glycosylation site" description="N-linked (GlcNAc...) asparagine" evidence="2">
    <location>
        <position position="300"/>
    </location>
</feature>
<feature type="glycosylation site" description="N-linked (GlcNAc...) asparagine" evidence="2">
    <location>
        <position position="361"/>
    </location>
</feature>
<feature type="glycosylation site" description="N-linked (GlcNAc...) asparagine" evidence="2">
    <location>
        <position position="385"/>
    </location>
</feature>
<feature type="glycosylation site" description="N-linked (GlcNAc...) asparagine" evidence="2">
    <location>
        <position position="419"/>
    </location>
</feature>
<feature type="disulfide bond" evidence="1">
    <location>
        <begin position="129"/>
        <end position="144"/>
    </location>
</feature>
<feature type="disulfide bond" evidence="1">
    <location>
        <begin position="314"/>
        <end position="330"/>
    </location>
</feature>
<feature type="disulfide bond" evidence="1">
    <location>
        <begin position="439"/>
        <end position="444"/>
    </location>
</feature>
<feature type="disulfide bond" evidence="1">
    <location>
        <begin position="462"/>
        <end position="469"/>
    </location>
</feature>